<evidence type="ECO:0000255" key="1">
    <source>
        <dbReference type="HAMAP-Rule" id="MF_00952"/>
    </source>
</evidence>
<evidence type="ECO:0000255" key="2">
    <source>
        <dbReference type="PROSITE-ProRule" id="PRU01383"/>
    </source>
</evidence>
<evidence type="ECO:0000256" key="3">
    <source>
        <dbReference type="SAM" id="MobiDB-lite"/>
    </source>
</evidence>
<gene>
    <name evidence="1" type="primary">topA</name>
    <name type="ordered locus">XF_0920</name>
</gene>
<accession>Q9PEV8</accession>
<dbReference type="EC" id="5.6.2.1" evidence="1"/>
<dbReference type="EMBL" id="AE003849">
    <property type="protein sequence ID" value="AAF83730.1"/>
    <property type="molecule type" value="Genomic_DNA"/>
</dbReference>
<dbReference type="PIR" id="B82746">
    <property type="entry name" value="B82746"/>
</dbReference>
<dbReference type="RefSeq" id="WP_010893440.1">
    <property type="nucleotide sequence ID" value="NC_002488.3"/>
</dbReference>
<dbReference type="SMR" id="Q9PEV8"/>
<dbReference type="STRING" id="160492.XF_0920"/>
<dbReference type="KEGG" id="xfa:XF_0920"/>
<dbReference type="eggNOG" id="COG0550">
    <property type="taxonomic scope" value="Bacteria"/>
</dbReference>
<dbReference type="eggNOG" id="COG1754">
    <property type="taxonomic scope" value="Bacteria"/>
</dbReference>
<dbReference type="HOGENOM" id="CLU_002929_0_1_6"/>
<dbReference type="Proteomes" id="UP000000812">
    <property type="component" value="Chromosome"/>
</dbReference>
<dbReference type="GO" id="GO:0003677">
    <property type="term" value="F:DNA binding"/>
    <property type="evidence" value="ECO:0007669"/>
    <property type="project" value="UniProtKB-KW"/>
</dbReference>
<dbReference type="GO" id="GO:0003917">
    <property type="term" value="F:DNA topoisomerase type I (single strand cut, ATP-independent) activity"/>
    <property type="evidence" value="ECO:0007669"/>
    <property type="project" value="UniProtKB-UniRule"/>
</dbReference>
<dbReference type="GO" id="GO:0046872">
    <property type="term" value="F:metal ion binding"/>
    <property type="evidence" value="ECO:0007669"/>
    <property type="project" value="UniProtKB-KW"/>
</dbReference>
<dbReference type="GO" id="GO:0006265">
    <property type="term" value="P:DNA topological change"/>
    <property type="evidence" value="ECO:0007669"/>
    <property type="project" value="UniProtKB-UniRule"/>
</dbReference>
<dbReference type="CDD" id="cd00186">
    <property type="entry name" value="TOP1Ac"/>
    <property type="match status" value="1"/>
</dbReference>
<dbReference type="CDD" id="cd03363">
    <property type="entry name" value="TOPRIM_TopoIA_TopoI"/>
    <property type="match status" value="1"/>
</dbReference>
<dbReference type="Gene3D" id="3.40.50.140">
    <property type="match status" value="1"/>
</dbReference>
<dbReference type="Gene3D" id="1.10.460.10">
    <property type="entry name" value="Topoisomerase I, domain 2"/>
    <property type="match status" value="1"/>
</dbReference>
<dbReference type="Gene3D" id="2.70.20.10">
    <property type="entry name" value="Topoisomerase I, domain 3"/>
    <property type="match status" value="1"/>
</dbReference>
<dbReference type="Gene3D" id="1.10.290.10">
    <property type="entry name" value="Topoisomerase I, domain 4"/>
    <property type="match status" value="1"/>
</dbReference>
<dbReference type="HAMAP" id="MF_00952">
    <property type="entry name" value="Topoisom_1_prok"/>
    <property type="match status" value="1"/>
</dbReference>
<dbReference type="InterPro" id="IPR000380">
    <property type="entry name" value="Topo_IA"/>
</dbReference>
<dbReference type="InterPro" id="IPR003601">
    <property type="entry name" value="Topo_IA_2"/>
</dbReference>
<dbReference type="InterPro" id="IPR023406">
    <property type="entry name" value="Topo_IA_AS"/>
</dbReference>
<dbReference type="InterPro" id="IPR013497">
    <property type="entry name" value="Topo_IA_cen"/>
</dbReference>
<dbReference type="InterPro" id="IPR013824">
    <property type="entry name" value="Topo_IA_cen_sub1"/>
</dbReference>
<dbReference type="InterPro" id="IPR013825">
    <property type="entry name" value="Topo_IA_cen_sub2"/>
</dbReference>
<dbReference type="InterPro" id="IPR013826">
    <property type="entry name" value="Topo_IA_cen_sub3"/>
</dbReference>
<dbReference type="InterPro" id="IPR023405">
    <property type="entry name" value="Topo_IA_core_domain"/>
</dbReference>
<dbReference type="InterPro" id="IPR003602">
    <property type="entry name" value="Topo_IA_DNA-bd_dom"/>
</dbReference>
<dbReference type="InterPro" id="IPR005733">
    <property type="entry name" value="TopoI_bac-type"/>
</dbReference>
<dbReference type="InterPro" id="IPR028612">
    <property type="entry name" value="Topoisom_1_IA"/>
</dbReference>
<dbReference type="InterPro" id="IPR025589">
    <property type="entry name" value="Toprim_C_rpt"/>
</dbReference>
<dbReference type="InterPro" id="IPR006171">
    <property type="entry name" value="TOPRIM_dom"/>
</dbReference>
<dbReference type="InterPro" id="IPR034149">
    <property type="entry name" value="TOPRIM_TopoI"/>
</dbReference>
<dbReference type="NCBIfam" id="NF006451">
    <property type="entry name" value="PRK08780.1"/>
    <property type="match status" value="1"/>
</dbReference>
<dbReference type="NCBIfam" id="TIGR01051">
    <property type="entry name" value="topA_bact"/>
    <property type="match status" value="1"/>
</dbReference>
<dbReference type="PANTHER" id="PTHR42785:SF1">
    <property type="entry name" value="DNA TOPOISOMERASE"/>
    <property type="match status" value="1"/>
</dbReference>
<dbReference type="PANTHER" id="PTHR42785">
    <property type="entry name" value="DNA TOPOISOMERASE, TYPE IA, CORE"/>
    <property type="match status" value="1"/>
</dbReference>
<dbReference type="Pfam" id="PF01131">
    <property type="entry name" value="Topoisom_bac"/>
    <property type="match status" value="1"/>
</dbReference>
<dbReference type="Pfam" id="PF01751">
    <property type="entry name" value="Toprim"/>
    <property type="match status" value="1"/>
</dbReference>
<dbReference type="Pfam" id="PF13368">
    <property type="entry name" value="Toprim_C_rpt"/>
    <property type="match status" value="3"/>
</dbReference>
<dbReference type="PRINTS" id="PR00417">
    <property type="entry name" value="PRTPISMRASEI"/>
</dbReference>
<dbReference type="SMART" id="SM00437">
    <property type="entry name" value="TOP1Ac"/>
    <property type="match status" value="1"/>
</dbReference>
<dbReference type="SMART" id="SM00436">
    <property type="entry name" value="TOP1Bc"/>
    <property type="match status" value="1"/>
</dbReference>
<dbReference type="SMART" id="SM00493">
    <property type="entry name" value="TOPRIM"/>
    <property type="match status" value="1"/>
</dbReference>
<dbReference type="SUPFAM" id="SSF56712">
    <property type="entry name" value="Prokaryotic type I DNA topoisomerase"/>
    <property type="match status" value="1"/>
</dbReference>
<dbReference type="PROSITE" id="PS00396">
    <property type="entry name" value="TOPO_IA_1"/>
    <property type="match status" value="1"/>
</dbReference>
<dbReference type="PROSITE" id="PS52039">
    <property type="entry name" value="TOPO_IA_2"/>
    <property type="match status" value="1"/>
</dbReference>
<dbReference type="PROSITE" id="PS50880">
    <property type="entry name" value="TOPRIM"/>
    <property type="match status" value="1"/>
</dbReference>
<sequence length="815" mass="91803">MPKHLLIVESPAKAKTINKYLGKDFTVLASYGHVRDLVPKEGAVDPENGFAMRYDLIDKNEKHVEAITKAAKTADSIYLATDPDREGEAISWHISEILKERGLLKDKPMQRIVFTEITPRAIKEAIQKPRMIASDLVDAQQARRALDYLVGFNLSPVLWRKVQRGLSAGRVQSPALRMIVEREEEIEAFITREYWSIHAECAHPAQHFSAKLIKLDGQKFEQFTITDSDTAAAAQRRIQQVAQGRLHITDVTNKERKRRPAPPFITSTLQQEASRKLGFTTRKTMQIAQKLYEGIALGEEGSVGLITYMRTDSVNLSLDALSEIRDIIARDYGTNALPDKPNVYTTKSKNAQEAHEAVRPTSALRTPTQVAPYLSNEEHRLYELVWKRAVASQMIPAILNTTSVDLAAGNEHVFRATGTTVVVQGFLAVYEEGKDNKNAEDDDEGRKLPVMKTGENVPLERILTEQHFTQPPPRYTEAALVKALEEYGIGRPSTYASIIQTLLFRKYVDMEGRSFRPTDIGRAVSKFLASHFTRYVDYDFTAHLEDELDAISRGEEEWIPLMKKFWVPFKELVEDKKDSLDKTDAGSVRLLGIDPTSGKEVSGRIGRFGPMVQIGTVDDEEKPRFASLRPNQSIYSISLEEAIELFKMPRVLGEDQSQQVSVGIGRFGPFAKRGSTYVSLKSEDDPYTIDLARATFLINEKEEIARNRIIKNFENSQIQVLNGRFGPYISDGKLNGKIPKDREPASLTLEEAQQLLIDTGKPARKNFSTKKTATKNETRKQTTKKRTTDAKATKKVSDKPVKKQIKKRIAPNITE</sequence>
<name>TOP1_XYLFA</name>
<protein>
    <recommendedName>
        <fullName evidence="1">DNA topoisomerase 1</fullName>
        <ecNumber evidence="1">5.6.2.1</ecNumber>
    </recommendedName>
    <alternativeName>
        <fullName evidence="1">DNA topoisomerase I</fullName>
    </alternativeName>
    <alternativeName>
        <fullName>Omega-protein</fullName>
    </alternativeName>
    <alternativeName>
        <fullName>Relaxing enzyme</fullName>
    </alternativeName>
    <alternativeName>
        <fullName>Swivelase</fullName>
    </alternativeName>
    <alternativeName>
        <fullName>Untwisting enzyme</fullName>
    </alternativeName>
</protein>
<feature type="chain" id="PRO_0000145172" description="DNA topoisomerase 1">
    <location>
        <begin position="1"/>
        <end position="815"/>
    </location>
</feature>
<feature type="domain" description="Toprim" evidence="1">
    <location>
        <begin position="3"/>
        <end position="119"/>
    </location>
</feature>
<feature type="domain" description="Topo IA-type catalytic" evidence="2">
    <location>
        <begin position="133"/>
        <end position="573"/>
    </location>
</feature>
<feature type="region of interest" description="Interaction with DNA" evidence="1">
    <location>
        <begin position="167"/>
        <end position="172"/>
    </location>
</feature>
<feature type="region of interest" description="Disordered" evidence="3">
    <location>
        <begin position="760"/>
        <end position="815"/>
    </location>
</feature>
<feature type="compositionally biased region" description="Basic and acidic residues" evidence="3">
    <location>
        <begin position="774"/>
        <end position="801"/>
    </location>
</feature>
<feature type="active site" description="O-(5'-phospho-DNA)-tyrosine intermediate" evidence="2">
    <location>
        <position position="308"/>
    </location>
</feature>
<feature type="binding site" evidence="1">
    <location>
        <position position="9"/>
    </location>
    <ligand>
        <name>Mg(2+)</name>
        <dbReference type="ChEBI" id="CHEBI:18420"/>
        <note>catalytic</note>
    </ligand>
</feature>
<feature type="binding site" evidence="1">
    <location>
        <position position="82"/>
    </location>
    <ligand>
        <name>Mg(2+)</name>
        <dbReference type="ChEBI" id="CHEBI:18420"/>
        <note>catalytic</note>
    </ligand>
</feature>
<feature type="site" description="Interaction with DNA" evidence="1">
    <location>
        <position position="33"/>
    </location>
</feature>
<feature type="site" description="Interaction with DNA" evidence="1">
    <location>
        <position position="143"/>
    </location>
</feature>
<feature type="site" description="Interaction with DNA" evidence="1">
    <location>
        <position position="144"/>
    </location>
</feature>
<feature type="site" description="Interaction with DNA" evidence="1">
    <location>
        <position position="147"/>
    </location>
</feature>
<feature type="site" description="Interaction with DNA" evidence="1">
    <location>
        <position position="159"/>
    </location>
</feature>
<feature type="site" description="Interaction with DNA" evidence="1">
    <location>
        <position position="310"/>
    </location>
</feature>
<feature type="site" description="Interaction with DNA" evidence="1">
    <location>
        <position position="505"/>
    </location>
</feature>
<reference key="1">
    <citation type="journal article" date="2000" name="Nature">
        <title>The genome sequence of the plant pathogen Xylella fastidiosa.</title>
        <authorList>
            <person name="Simpson A.J.G."/>
            <person name="Reinach F.C."/>
            <person name="Arruda P."/>
            <person name="Abreu F.A."/>
            <person name="Acencio M."/>
            <person name="Alvarenga R."/>
            <person name="Alves L.M.C."/>
            <person name="Araya J.E."/>
            <person name="Baia G.S."/>
            <person name="Baptista C.S."/>
            <person name="Barros M.H."/>
            <person name="Bonaccorsi E.D."/>
            <person name="Bordin S."/>
            <person name="Bove J.M."/>
            <person name="Briones M.R.S."/>
            <person name="Bueno M.R.P."/>
            <person name="Camargo A.A."/>
            <person name="Camargo L.E.A."/>
            <person name="Carraro D.M."/>
            <person name="Carrer H."/>
            <person name="Colauto N.B."/>
            <person name="Colombo C."/>
            <person name="Costa F.F."/>
            <person name="Costa M.C.R."/>
            <person name="Costa-Neto C.M."/>
            <person name="Coutinho L.L."/>
            <person name="Cristofani M."/>
            <person name="Dias-Neto E."/>
            <person name="Docena C."/>
            <person name="El-Dorry H."/>
            <person name="Facincani A.P."/>
            <person name="Ferreira A.J.S."/>
            <person name="Ferreira V.C.A."/>
            <person name="Ferro J.A."/>
            <person name="Fraga J.S."/>
            <person name="Franca S.C."/>
            <person name="Franco M.C."/>
            <person name="Frohme M."/>
            <person name="Furlan L.R."/>
            <person name="Garnier M."/>
            <person name="Goldman G.H."/>
            <person name="Goldman M.H.S."/>
            <person name="Gomes S.L."/>
            <person name="Gruber A."/>
            <person name="Ho P.L."/>
            <person name="Hoheisel J.D."/>
            <person name="Junqueira M.L."/>
            <person name="Kemper E.L."/>
            <person name="Kitajima J.P."/>
            <person name="Krieger J.E."/>
            <person name="Kuramae E.E."/>
            <person name="Laigret F."/>
            <person name="Lambais M.R."/>
            <person name="Leite L.C.C."/>
            <person name="Lemos E.G.M."/>
            <person name="Lemos M.V.F."/>
            <person name="Lopes S.A."/>
            <person name="Lopes C.R."/>
            <person name="Machado J.A."/>
            <person name="Machado M.A."/>
            <person name="Madeira A.M.B.N."/>
            <person name="Madeira H.M.F."/>
            <person name="Marino C.L."/>
            <person name="Marques M.V."/>
            <person name="Martins E.A.L."/>
            <person name="Martins E.M.F."/>
            <person name="Matsukuma A.Y."/>
            <person name="Menck C.F.M."/>
            <person name="Miracca E.C."/>
            <person name="Miyaki C.Y."/>
            <person name="Monteiro-Vitorello C.B."/>
            <person name="Moon D.H."/>
            <person name="Nagai M.A."/>
            <person name="Nascimento A.L.T.O."/>
            <person name="Netto L.E.S."/>
            <person name="Nhani A. Jr."/>
            <person name="Nobrega F.G."/>
            <person name="Nunes L.R."/>
            <person name="Oliveira M.A."/>
            <person name="de Oliveira M.C."/>
            <person name="de Oliveira R.C."/>
            <person name="Palmieri D.A."/>
            <person name="Paris A."/>
            <person name="Peixoto B.R."/>
            <person name="Pereira G.A.G."/>
            <person name="Pereira H.A. Jr."/>
            <person name="Pesquero J.B."/>
            <person name="Quaggio R.B."/>
            <person name="Roberto P.G."/>
            <person name="Rodrigues V."/>
            <person name="de Rosa A.J.M."/>
            <person name="de Rosa V.E. Jr."/>
            <person name="de Sa R.G."/>
            <person name="Santelli R.V."/>
            <person name="Sawasaki H.E."/>
            <person name="da Silva A.C.R."/>
            <person name="da Silva A.M."/>
            <person name="da Silva F.R."/>
            <person name="Silva W.A. Jr."/>
            <person name="da Silveira J.F."/>
            <person name="Silvestri M.L.Z."/>
            <person name="Siqueira W.J."/>
            <person name="de Souza A.A."/>
            <person name="de Souza A.P."/>
            <person name="Terenzi M.F."/>
            <person name="Truffi D."/>
            <person name="Tsai S.M."/>
            <person name="Tsuhako M.H."/>
            <person name="Vallada H."/>
            <person name="Van Sluys M.A."/>
            <person name="Verjovski-Almeida S."/>
            <person name="Vettore A.L."/>
            <person name="Zago M.A."/>
            <person name="Zatz M."/>
            <person name="Meidanis J."/>
            <person name="Setubal J.C."/>
        </authorList>
    </citation>
    <scope>NUCLEOTIDE SEQUENCE [LARGE SCALE GENOMIC DNA]</scope>
    <source>
        <strain>9a5c</strain>
    </source>
</reference>
<comment type="function">
    <text evidence="1">Releases the supercoiling and torsional tension of DNA, which is introduced during the DNA replication and transcription, by transiently cleaving and rejoining one strand of the DNA duplex. Introduces a single-strand break via transesterification at a target site in duplex DNA. The scissile phosphodiester is attacked by the catalytic tyrosine of the enzyme, resulting in the formation of a DNA-(5'-phosphotyrosyl)-enzyme intermediate and the expulsion of a 3'-OH DNA strand. The free DNA strand then undergoes passage around the unbroken strand, thus removing DNA supercoils. Finally, in the religation step, the DNA 3'-OH attacks the covalent intermediate to expel the active-site tyrosine and restore the DNA phosphodiester backbone.</text>
</comment>
<comment type="catalytic activity">
    <reaction evidence="1">
        <text>ATP-independent breakage of single-stranded DNA, followed by passage and rejoining.</text>
        <dbReference type="EC" id="5.6.2.1"/>
    </reaction>
</comment>
<comment type="cofactor">
    <cofactor evidence="1">
        <name>Mg(2+)</name>
        <dbReference type="ChEBI" id="CHEBI:18420"/>
    </cofactor>
</comment>
<comment type="subunit">
    <text evidence="1">Monomer.</text>
</comment>
<comment type="similarity">
    <text evidence="1">Belongs to the type IA topoisomerase family.</text>
</comment>
<keyword id="KW-0238">DNA-binding</keyword>
<keyword id="KW-0413">Isomerase</keyword>
<keyword id="KW-0460">Magnesium</keyword>
<keyword id="KW-0479">Metal-binding</keyword>
<keyword id="KW-0799">Topoisomerase</keyword>
<proteinExistence type="inferred from homology"/>
<organism>
    <name type="scientific">Xylella fastidiosa (strain 9a5c)</name>
    <dbReference type="NCBI Taxonomy" id="160492"/>
    <lineage>
        <taxon>Bacteria</taxon>
        <taxon>Pseudomonadati</taxon>
        <taxon>Pseudomonadota</taxon>
        <taxon>Gammaproteobacteria</taxon>
        <taxon>Lysobacterales</taxon>
        <taxon>Lysobacteraceae</taxon>
        <taxon>Xylella</taxon>
    </lineage>
</organism>